<protein>
    <recommendedName>
        <fullName evidence="1">Ribosomal protein L11 methyltransferase</fullName>
        <shortName evidence="1">L11 Mtase</shortName>
        <ecNumber evidence="1">2.1.1.-</ecNumber>
    </recommendedName>
</protein>
<dbReference type="EC" id="2.1.1.-" evidence="1"/>
<dbReference type="EMBL" id="CP000825">
    <property type="protein sequence ID" value="ABV51195.1"/>
    <property type="molecule type" value="Genomic_DNA"/>
</dbReference>
<dbReference type="RefSeq" id="WP_012008232.1">
    <property type="nucleotide sequence ID" value="NC_009840.1"/>
</dbReference>
<dbReference type="SMR" id="A8G6G4"/>
<dbReference type="STRING" id="93060.P9215_15821"/>
<dbReference type="KEGG" id="pmh:P9215_15821"/>
<dbReference type="eggNOG" id="COG2264">
    <property type="taxonomic scope" value="Bacteria"/>
</dbReference>
<dbReference type="HOGENOM" id="CLU_049382_0_1_3"/>
<dbReference type="OrthoDB" id="9785995at2"/>
<dbReference type="Proteomes" id="UP000002014">
    <property type="component" value="Chromosome"/>
</dbReference>
<dbReference type="GO" id="GO:0005737">
    <property type="term" value="C:cytoplasm"/>
    <property type="evidence" value="ECO:0007669"/>
    <property type="project" value="UniProtKB-SubCell"/>
</dbReference>
<dbReference type="GO" id="GO:0016279">
    <property type="term" value="F:protein-lysine N-methyltransferase activity"/>
    <property type="evidence" value="ECO:0007669"/>
    <property type="project" value="RHEA"/>
</dbReference>
<dbReference type="GO" id="GO:0032259">
    <property type="term" value="P:methylation"/>
    <property type="evidence" value="ECO:0007669"/>
    <property type="project" value="UniProtKB-KW"/>
</dbReference>
<dbReference type="CDD" id="cd02440">
    <property type="entry name" value="AdoMet_MTases"/>
    <property type="match status" value="1"/>
</dbReference>
<dbReference type="Gene3D" id="3.40.50.150">
    <property type="entry name" value="Vaccinia Virus protein VP39"/>
    <property type="match status" value="1"/>
</dbReference>
<dbReference type="HAMAP" id="MF_00735">
    <property type="entry name" value="Methyltr_PrmA"/>
    <property type="match status" value="1"/>
</dbReference>
<dbReference type="InterPro" id="IPR050078">
    <property type="entry name" value="Ribosomal_L11_MeTrfase_PrmA"/>
</dbReference>
<dbReference type="InterPro" id="IPR004498">
    <property type="entry name" value="Ribosomal_PrmA_MeTrfase"/>
</dbReference>
<dbReference type="InterPro" id="IPR029063">
    <property type="entry name" value="SAM-dependent_MTases_sf"/>
</dbReference>
<dbReference type="NCBIfam" id="TIGR00406">
    <property type="entry name" value="prmA"/>
    <property type="match status" value="1"/>
</dbReference>
<dbReference type="PANTHER" id="PTHR43648">
    <property type="entry name" value="ELECTRON TRANSFER FLAVOPROTEIN BETA SUBUNIT LYSINE METHYLTRANSFERASE"/>
    <property type="match status" value="1"/>
</dbReference>
<dbReference type="PANTHER" id="PTHR43648:SF1">
    <property type="entry name" value="ELECTRON TRANSFER FLAVOPROTEIN BETA SUBUNIT LYSINE METHYLTRANSFERASE"/>
    <property type="match status" value="1"/>
</dbReference>
<dbReference type="Pfam" id="PF06325">
    <property type="entry name" value="PrmA"/>
    <property type="match status" value="1"/>
</dbReference>
<dbReference type="PIRSF" id="PIRSF000401">
    <property type="entry name" value="RPL11_MTase"/>
    <property type="match status" value="1"/>
</dbReference>
<dbReference type="SUPFAM" id="SSF53335">
    <property type="entry name" value="S-adenosyl-L-methionine-dependent methyltransferases"/>
    <property type="match status" value="1"/>
</dbReference>
<evidence type="ECO:0000255" key="1">
    <source>
        <dbReference type="HAMAP-Rule" id="MF_00735"/>
    </source>
</evidence>
<organism>
    <name type="scientific">Prochlorococcus marinus (strain MIT 9215)</name>
    <dbReference type="NCBI Taxonomy" id="93060"/>
    <lineage>
        <taxon>Bacteria</taxon>
        <taxon>Bacillati</taxon>
        <taxon>Cyanobacteriota</taxon>
        <taxon>Cyanophyceae</taxon>
        <taxon>Synechococcales</taxon>
        <taxon>Prochlorococcaceae</taxon>
        <taxon>Prochlorococcus</taxon>
    </lineage>
</organism>
<gene>
    <name evidence="1" type="primary">prmA</name>
    <name type="ordered locus">P9215_15821</name>
</gene>
<comment type="function">
    <text evidence="1">Methylates ribosomal protein L11.</text>
</comment>
<comment type="catalytic activity">
    <reaction evidence="1">
        <text>L-lysyl-[protein] + 3 S-adenosyl-L-methionine = N(6),N(6),N(6)-trimethyl-L-lysyl-[protein] + 3 S-adenosyl-L-homocysteine + 3 H(+)</text>
        <dbReference type="Rhea" id="RHEA:54192"/>
        <dbReference type="Rhea" id="RHEA-COMP:9752"/>
        <dbReference type="Rhea" id="RHEA-COMP:13826"/>
        <dbReference type="ChEBI" id="CHEBI:15378"/>
        <dbReference type="ChEBI" id="CHEBI:29969"/>
        <dbReference type="ChEBI" id="CHEBI:57856"/>
        <dbReference type="ChEBI" id="CHEBI:59789"/>
        <dbReference type="ChEBI" id="CHEBI:61961"/>
    </reaction>
</comment>
<comment type="subcellular location">
    <subcellularLocation>
        <location evidence="1">Cytoplasm</location>
    </subcellularLocation>
</comment>
<comment type="similarity">
    <text evidence="1">Belongs to the methyltransferase superfamily. PrmA family.</text>
</comment>
<proteinExistence type="inferred from homology"/>
<accession>A8G6G4</accession>
<reference key="1">
    <citation type="journal article" date="2007" name="PLoS Genet.">
        <title>Patterns and implications of gene gain and loss in the evolution of Prochlorococcus.</title>
        <authorList>
            <person name="Kettler G.C."/>
            <person name="Martiny A.C."/>
            <person name="Huang K."/>
            <person name="Zucker J."/>
            <person name="Coleman M.L."/>
            <person name="Rodrigue S."/>
            <person name="Chen F."/>
            <person name="Lapidus A."/>
            <person name="Ferriera S."/>
            <person name="Johnson J."/>
            <person name="Steglich C."/>
            <person name="Church G.M."/>
            <person name="Richardson P."/>
            <person name="Chisholm S.W."/>
        </authorList>
    </citation>
    <scope>NUCLEOTIDE SEQUENCE [LARGE SCALE GENOMIC DNA]</scope>
    <source>
        <strain>MIT 9215</strain>
    </source>
</reference>
<name>PRMA_PROM2</name>
<sequence length="309" mass="35565">MEIKDWYKLTFQIESDSEDIIIWKLNELGIFSFSFEYLIKNQNKKEVNIWLPFDSWDNNSRSDFEKIISKILKINDSKNKFFNWSIIKEEDWLTSWKKFWAPELVGNHFLILPCWINLNEKFKDKQIIKIDPGAAFGTGSHPSTYLCLEKMENILFSDKKVLDIGSGSGILSIAARLGGAKEVCAVDNDYLAINSTNSNFQLNFGNLNNLNTYLGSFNEVILKNQLKQFDFVLCNILAEVIKGMIPNIYKCLRNNGEVIFSGILNSQKDEIIKILIQNNLKLLDVSSRKNWACISAQKPASNPKHKIYL</sequence>
<keyword id="KW-0963">Cytoplasm</keyword>
<keyword id="KW-0489">Methyltransferase</keyword>
<keyword id="KW-0949">S-adenosyl-L-methionine</keyword>
<keyword id="KW-0808">Transferase</keyword>
<feature type="chain" id="PRO_1000062128" description="Ribosomal protein L11 methyltransferase">
    <location>
        <begin position="1"/>
        <end position="309"/>
    </location>
</feature>
<feature type="binding site" evidence="1">
    <location>
        <position position="144"/>
    </location>
    <ligand>
        <name>S-adenosyl-L-methionine</name>
        <dbReference type="ChEBI" id="CHEBI:59789"/>
    </ligand>
</feature>
<feature type="binding site" evidence="1">
    <location>
        <position position="165"/>
    </location>
    <ligand>
        <name>S-adenosyl-L-methionine</name>
        <dbReference type="ChEBI" id="CHEBI:59789"/>
    </ligand>
</feature>
<feature type="binding site" evidence="1">
    <location>
        <position position="187"/>
    </location>
    <ligand>
        <name>S-adenosyl-L-methionine</name>
        <dbReference type="ChEBI" id="CHEBI:59789"/>
    </ligand>
</feature>
<feature type="binding site" evidence="1">
    <location>
        <position position="235"/>
    </location>
    <ligand>
        <name>S-adenosyl-L-methionine</name>
        <dbReference type="ChEBI" id="CHEBI:59789"/>
    </ligand>
</feature>